<gene>
    <name evidence="1" type="primary">coaD</name>
    <name type="ordered locus">ACICU_00798</name>
</gene>
<dbReference type="EC" id="2.7.7.3" evidence="1"/>
<dbReference type="EMBL" id="CP000863">
    <property type="protein sequence ID" value="ACC56110.1"/>
    <property type="molecule type" value="Genomic_DNA"/>
</dbReference>
<dbReference type="RefSeq" id="WP_000047853.1">
    <property type="nucleotide sequence ID" value="NZ_CP031380.1"/>
</dbReference>
<dbReference type="PDB" id="5YH7">
    <property type="method" value="X-ray"/>
    <property type="resolution" value="2.03 A"/>
    <property type="chains" value="A=1-163"/>
</dbReference>
<dbReference type="PDB" id="5ZZC">
    <property type="method" value="X-ray"/>
    <property type="resolution" value="1.96 A"/>
    <property type="chains" value="A=1-163"/>
</dbReference>
<dbReference type="PDB" id="6A6D">
    <property type="method" value="X-ray"/>
    <property type="resolution" value="2.90 A"/>
    <property type="chains" value="A=1-163"/>
</dbReference>
<dbReference type="PDB" id="6A75">
    <property type="method" value="X-ray"/>
    <property type="resolution" value="2.75 A"/>
    <property type="chains" value="A=1-163"/>
</dbReference>
<dbReference type="PDB" id="6A7D">
    <property type="method" value="X-ray"/>
    <property type="resolution" value="2.74 A"/>
    <property type="chains" value="A=1-163"/>
</dbReference>
<dbReference type="PDBsum" id="5YH7"/>
<dbReference type="PDBsum" id="5ZZC"/>
<dbReference type="PDBsum" id="6A6D"/>
<dbReference type="PDBsum" id="6A75"/>
<dbReference type="PDBsum" id="6A7D"/>
<dbReference type="SMR" id="B2HUN5"/>
<dbReference type="GeneID" id="92892775"/>
<dbReference type="KEGG" id="abc:ACICU_00798"/>
<dbReference type="HOGENOM" id="CLU_100149_0_1_6"/>
<dbReference type="UniPathway" id="UPA00241">
    <property type="reaction ID" value="UER00355"/>
</dbReference>
<dbReference type="Proteomes" id="UP000008839">
    <property type="component" value="Chromosome"/>
</dbReference>
<dbReference type="GO" id="GO:0005737">
    <property type="term" value="C:cytoplasm"/>
    <property type="evidence" value="ECO:0007669"/>
    <property type="project" value="UniProtKB-SubCell"/>
</dbReference>
<dbReference type="GO" id="GO:0005524">
    <property type="term" value="F:ATP binding"/>
    <property type="evidence" value="ECO:0007669"/>
    <property type="project" value="UniProtKB-KW"/>
</dbReference>
<dbReference type="GO" id="GO:0004595">
    <property type="term" value="F:pantetheine-phosphate adenylyltransferase activity"/>
    <property type="evidence" value="ECO:0007669"/>
    <property type="project" value="UniProtKB-UniRule"/>
</dbReference>
<dbReference type="GO" id="GO:0015937">
    <property type="term" value="P:coenzyme A biosynthetic process"/>
    <property type="evidence" value="ECO:0007669"/>
    <property type="project" value="UniProtKB-UniRule"/>
</dbReference>
<dbReference type="CDD" id="cd02163">
    <property type="entry name" value="PPAT"/>
    <property type="match status" value="1"/>
</dbReference>
<dbReference type="Gene3D" id="3.40.50.620">
    <property type="entry name" value="HUPs"/>
    <property type="match status" value="1"/>
</dbReference>
<dbReference type="HAMAP" id="MF_00151">
    <property type="entry name" value="PPAT_bact"/>
    <property type="match status" value="1"/>
</dbReference>
<dbReference type="InterPro" id="IPR004821">
    <property type="entry name" value="Cyt_trans-like"/>
</dbReference>
<dbReference type="InterPro" id="IPR001980">
    <property type="entry name" value="PPAT"/>
</dbReference>
<dbReference type="InterPro" id="IPR014729">
    <property type="entry name" value="Rossmann-like_a/b/a_fold"/>
</dbReference>
<dbReference type="NCBIfam" id="TIGR01510">
    <property type="entry name" value="coaD_prev_kdtB"/>
    <property type="match status" value="1"/>
</dbReference>
<dbReference type="NCBIfam" id="TIGR00125">
    <property type="entry name" value="cyt_tran_rel"/>
    <property type="match status" value="1"/>
</dbReference>
<dbReference type="PANTHER" id="PTHR21342">
    <property type="entry name" value="PHOSPHOPANTETHEINE ADENYLYLTRANSFERASE"/>
    <property type="match status" value="1"/>
</dbReference>
<dbReference type="PANTHER" id="PTHR21342:SF1">
    <property type="entry name" value="PHOSPHOPANTETHEINE ADENYLYLTRANSFERASE"/>
    <property type="match status" value="1"/>
</dbReference>
<dbReference type="Pfam" id="PF01467">
    <property type="entry name" value="CTP_transf_like"/>
    <property type="match status" value="1"/>
</dbReference>
<dbReference type="PRINTS" id="PR01020">
    <property type="entry name" value="LPSBIOSNTHSS"/>
</dbReference>
<dbReference type="SUPFAM" id="SSF52374">
    <property type="entry name" value="Nucleotidylyl transferase"/>
    <property type="match status" value="1"/>
</dbReference>
<keyword id="KW-0002">3D-structure</keyword>
<keyword id="KW-0067">ATP-binding</keyword>
<keyword id="KW-0173">Coenzyme A biosynthesis</keyword>
<keyword id="KW-0963">Cytoplasm</keyword>
<keyword id="KW-0460">Magnesium</keyword>
<keyword id="KW-0547">Nucleotide-binding</keyword>
<keyword id="KW-0548">Nucleotidyltransferase</keyword>
<keyword id="KW-0808">Transferase</keyword>
<feature type="chain" id="PRO_1000096751" description="Phosphopantetheine adenylyltransferase">
    <location>
        <begin position="1"/>
        <end position="163"/>
    </location>
</feature>
<feature type="binding site" evidence="1">
    <location>
        <begin position="11"/>
        <end position="12"/>
    </location>
    <ligand>
        <name>ATP</name>
        <dbReference type="ChEBI" id="CHEBI:30616"/>
    </ligand>
</feature>
<feature type="binding site" evidence="1">
    <location>
        <position position="11"/>
    </location>
    <ligand>
        <name>substrate</name>
    </ligand>
</feature>
<feature type="binding site" evidence="1">
    <location>
        <position position="19"/>
    </location>
    <ligand>
        <name>ATP</name>
        <dbReference type="ChEBI" id="CHEBI:30616"/>
    </ligand>
</feature>
<feature type="binding site" evidence="1">
    <location>
        <position position="43"/>
    </location>
    <ligand>
        <name>substrate</name>
    </ligand>
</feature>
<feature type="binding site" evidence="1">
    <location>
        <position position="75"/>
    </location>
    <ligand>
        <name>substrate</name>
    </ligand>
</feature>
<feature type="binding site" evidence="1">
    <location>
        <position position="89"/>
    </location>
    <ligand>
        <name>substrate</name>
    </ligand>
</feature>
<feature type="binding site" evidence="1">
    <location>
        <begin position="90"/>
        <end position="92"/>
    </location>
    <ligand>
        <name>ATP</name>
        <dbReference type="ChEBI" id="CHEBI:30616"/>
    </ligand>
</feature>
<feature type="binding site" evidence="1">
    <location>
        <position position="100"/>
    </location>
    <ligand>
        <name>ATP</name>
        <dbReference type="ChEBI" id="CHEBI:30616"/>
    </ligand>
</feature>
<feature type="binding site" evidence="1">
    <location>
        <begin position="125"/>
        <end position="131"/>
    </location>
    <ligand>
        <name>ATP</name>
        <dbReference type="ChEBI" id="CHEBI:30616"/>
    </ligand>
</feature>
<feature type="site" description="Transition state stabilizer" evidence="1">
    <location>
        <position position="19"/>
    </location>
</feature>
<feature type="strand" evidence="2">
    <location>
        <begin position="5"/>
        <end position="10"/>
    </location>
</feature>
<feature type="helix" evidence="2">
    <location>
        <begin position="17"/>
        <end position="27"/>
    </location>
</feature>
<feature type="strand" evidence="2">
    <location>
        <begin position="30"/>
        <end position="38"/>
    </location>
</feature>
<feature type="turn" evidence="2">
    <location>
        <begin position="41"/>
        <end position="43"/>
    </location>
</feature>
<feature type="helix" evidence="2">
    <location>
        <begin position="49"/>
        <end position="60"/>
    </location>
</feature>
<feature type="strand" evidence="2">
    <location>
        <begin position="66"/>
        <end position="71"/>
    </location>
</feature>
<feature type="helix" evidence="2">
    <location>
        <begin position="75"/>
        <end position="81"/>
    </location>
</feature>
<feature type="strand" evidence="2">
    <location>
        <begin position="85"/>
        <end position="90"/>
    </location>
</feature>
<feature type="helix" evidence="2">
    <location>
        <begin position="94"/>
        <end position="110"/>
    </location>
</feature>
<feature type="strand" evidence="2">
    <location>
        <begin position="116"/>
        <end position="119"/>
    </location>
</feature>
<feature type="helix" evidence="2">
    <location>
        <begin position="123"/>
        <end position="125"/>
    </location>
</feature>
<feature type="helix" evidence="2">
    <location>
        <begin position="130"/>
        <end position="138"/>
    </location>
</feature>
<feature type="helix" evidence="2">
    <location>
        <begin position="144"/>
        <end position="146"/>
    </location>
</feature>
<feature type="helix" evidence="2">
    <location>
        <begin position="149"/>
        <end position="161"/>
    </location>
</feature>
<name>COAD_ACIBC</name>
<sequence>MSKTRVIYPGTFDPITNGHVDLVTRASRMFDEVVVAIAIGHHKNPLFSLEERVALAQSSLGHLSNVEFVGFDGLLVNFFKEQKATAVLRGLRAVSDFEYEFQLANMNRQLDPHFEAVFLTPSEQYSFISSTLIREIARLKGDVTKFVPQAVVEAFERKHQQGW</sequence>
<protein>
    <recommendedName>
        <fullName evidence="1">Phosphopantetheine adenylyltransferase</fullName>
        <ecNumber evidence="1">2.7.7.3</ecNumber>
    </recommendedName>
    <alternativeName>
        <fullName evidence="1">Dephospho-CoA pyrophosphorylase</fullName>
    </alternativeName>
    <alternativeName>
        <fullName evidence="1">Pantetheine-phosphate adenylyltransferase</fullName>
        <shortName evidence="1">PPAT</shortName>
    </alternativeName>
</protein>
<organism>
    <name type="scientific">Acinetobacter baumannii (strain ACICU)</name>
    <dbReference type="NCBI Taxonomy" id="405416"/>
    <lineage>
        <taxon>Bacteria</taxon>
        <taxon>Pseudomonadati</taxon>
        <taxon>Pseudomonadota</taxon>
        <taxon>Gammaproteobacteria</taxon>
        <taxon>Moraxellales</taxon>
        <taxon>Moraxellaceae</taxon>
        <taxon>Acinetobacter</taxon>
        <taxon>Acinetobacter calcoaceticus/baumannii complex</taxon>
    </lineage>
</organism>
<accession>B2HUN5</accession>
<reference key="1">
    <citation type="journal article" date="2008" name="Antimicrob. Agents Chemother.">
        <title>Whole-genome pyrosequencing of an epidemic multidrug-resistant Acinetobacter baumannii strain belonging to the European clone II group.</title>
        <authorList>
            <person name="Iacono M."/>
            <person name="Villa L."/>
            <person name="Fortini D."/>
            <person name="Bordoni R."/>
            <person name="Imperi F."/>
            <person name="Bonnal R.J."/>
            <person name="Sicheritz-Ponten T."/>
            <person name="De Bellis G."/>
            <person name="Visca P."/>
            <person name="Cassone A."/>
            <person name="Carattoli A."/>
        </authorList>
    </citation>
    <scope>NUCLEOTIDE SEQUENCE [LARGE SCALE GENOMIC DNA]</scope>
    <source>
        <strain>ACICU</strain>
    </source>
</reference>
<evidence type="ECO:0000255" key="1">
    <source>
        <dbReference type="HAMAP-Rule" id="MF_00151"/>
    </source>
</evidence>
<evidence type="ECO:0007829" key="2">
    <source>
        <dbReference type="PDB" id="5ZZC"/>
    </source>
</evidence>
<proteinExistence type="evidence at protein level"/>
<comment type="function">
    <text evidence="1">Reversibly transfers an adenylyl group from ATP to 4'-phosphopantetheine, yielding dephospho-CoA (dPCoA) and pyrophosphate.</text>
</comment>
<comment type="catalytic activity">
    <reaction evidence="1">
        <text>(R)-4'-phosphopantetheine + ATP + H(+) = 3'-dephospho-CoA + diphosphate</text>
        <dbReference type="Rhea" id="RHEA:19801"/>
        <dbReference type="ChEBI" id="CHEBI:15378"/>
        <dbReference type="ChEBI" id="CHEBI:30616"/>
        <dbReference type="ChEBI" id="CHEBI:33019"/>
        <dbReference type="ChEBI" id="CHEBI:57328"/>
        <dbReference type="ChEBI" id="CHEBI:61723"/>
        <dbReference type="EC" id="2.7.7.3"/>
    </reaction>
</comment>
<comment type="cofactor">
    <cofactor evidence="1">
        <name>Mg(2+)</name>
        <dbReference type="ChEBI" id="CHEBI:18420"/>
    </cofactor>
</comment>
<comment type="pathway">
    <text evidence="1">Cofactor biosynthesis; coenzyme A biosynthesis; CoA from (R)-pantothenate: step 4/5.</text>
</comment>
<comment type="subunit">
    <text evidence="1">Homohexamer.</text>
</comment>
<comment type="subcellular location">
    <subcellularLocation>
        <location evidence="1">Cytoplasm</location>
    </subcellularLocation>
</comment>
<comment type="similarity">
    <text evidence="1">Belongs to the bacterial CoaD family.</text>
</comment>